<reference key="1">
    <citation type="journal article" date="2002" name="Proc. Natl. Acad. Sci. U.S.A.">
        <title>Genome sequence of Streptococcus mutans UA159, a cariogenic dental pathogen.</title>
        <authorList>
            <person name="Ajdic D.J."/>
            <person name="McShan W.M."/>
            <person name="McLaughlin R.E."/>
            <person name="Savic G."/>
            <person name="Chang J."/>
            <person name="Carson M.B."/>
            <person name="Primeaux C."/>
            <person name="Tian R."/>
            <person name="Kenton S."/>
            <person name="Jia H.G."/>
            <person name="Lin S.P."/>
            <person name="Qian Y."/>
            <person name="Li S."/>
            <person name="Zhu H."/>
            <person name="Najar F.Z."/>
            <person name="Lai H."/>
            <person name="White J."/>
            <person name="Roe B.A."/>
            <person name="Ferretti J.J."/>
        </authorList>
    </citation>
    <scope>NUCLEOTIDE SEQUENCE [LARGE SCALE GENOMIC DNA]</scope>
    <source>
        <strain>ATCC 700610 / UA159</strain>
    </source>
</reference>
<name>MIAA_STRMU</name>
<sequence>MKTKLIVVLGPTAVGKTALGIKLAQQFHGEIISGDSQQVYRKLDIGTAKATAAEQAAVPHHLIDVREVDENYSAFDFVQEATKEIANICARGYLPIIVGGTGLYLQSLLEGYHLGGQVDHEAVLAYRRELETLSDTELSQLVETKQIVMTEPNRRRLMRSLELHKFSQGVQNQGSPYDVLLIGLNDNRQDLYERINARVDKMMAAGLLDEAKWLYDNYPHAQATRGIGYKELFPYFAGDIGLEEAVEKIKQNTRRFAKRQLTWFKNRMAVSFYSVSDSDYKGKINQAVVDFLRN</sequence>
<comment type="function">
    <text evidence="1">Catalyzes the transfer of a dimethylallyl group onto the adenine at position 37 in tRNAs that read codons beginning with uridine, leading to the formation of N6-(dimethylallyl)adenosine (i(6)A).</text>
</comment>
<comment type="catalytic activity">
    <reaction evidence="1">
        <text>adenosine(37) in tRNA + dimethylallyl diphosphate = N(6)-dimethylallyladenosine(37) in tRNA + diphosphate</text>
        <dbReference type="Rhea" id="RHEA:26482"/>
        <dbReference type="Rhea" id="RHEA-COMP:10162"/>
        <dbReference type="Rhea" id="RHEA-COMP:10375"/>
        <dbReference type="ChEBI" id="CHEBI:33019"/>
        <dbReference type="ChEBI" id="CHEBI:57623"/>
        <dbReference type="ChEBI" id="CHEBI:74411"/>
        <dbReference type="ChEBI" id="CHEBI:74415"/>
        <dbReference type="EC" id="2.5.1.75"/>
    </reaction>
</comment>
<comment type="cofactor">
    <cofactor evidence="1">
        <name>Mg(2+)</name>
        <dbReference type="ChEBI" id="CHEBI:18420"/>
    </cofactor>
</comment>
<comment type="subunit">
    <text evidence="1">Monomer.</text>
</comment>
<comment type="similarity">
    <text evidence="1">Belongs to the IPP transferase family.</text>
</comment>
<keyword id="KW-0067">ATP-binding</keyword>
<keyword id="KW-0460">Magnesium</keyword>
<keyword id="KW-0547">Nucleotide-binding</keyword>
<keyword id="KW-1185">Reference proteome</keyword>
<keyword id="KW-0808">Transferase</keyword>
<keyword id="KW-0819">tRNA processing</keyword>
<evidence type="ECO:0000255" key="1">
    <source>
        <dbReference type="HAMAP-Rule" id="MF_00185"/>
    </source>
</evidence>
<organism>
    <name type="scientific">Streptococcus mutans serotype c (strain ATCC 700610 / UA159)</name>
    <dbReference type="NCBI Taxonomy" id="210007"/>
    <lineage>
        <taxon>Bacteria</taxon>
        <taxon>Bacillati</taxon>
        <taxon>Bacillota</taxon>
        <taxon>Bacilli</taxon>
        <taxon>Lactobacillales</taxon>
        <taxon>Streptococcaceae</taxon>
        <taxon>Streptococcus</taxon>
    </lineage>
</organism>
<dbReference type="EC" id="2.5.1.75" evidence="1"/>
<dbReference type="EMBL" id="AE014133">
    <property type="protein sequence ID" value="AAN59133.1"/>
    <property type="molecule type" value="Genomic_DNA"/>
</dbReference>
<dbReference type="RefSeq" id="NP_721827.1">
    <property type="nucleotide sequence ID" value="NC_004350.2"/>
</dbReference>
<dbReference type="RefSeq" id="WP_002263069.1">
    <property type="nucleotide sequence ID" value="NC_004350.2"/>
</dbReference>
<dbReference type="SMR" id="Q8DT87"/>
<dbReference type="STRING" id="210007.SMU_1477"/>
<dbReference type="KEGG" id="smu:SMU_1477"/>
<dbReference type="PATRIC" id="fig|210007.7.peg.1314"/>
<dbReference type="eggNOG" id="COG0324">
    <property type="taxonomic scope" value="Bacteria"/>
</dbReference>
<dbReference type="HOGENOM" id="CLU_032616_0_1_9"/>
<dbReference type="OrthoDB" id="9776390at2"/>
<dbReference type="PhylomeDB" id="Q8DT87"/>
<dbReference type="Proteomes" id="UP000002512">
    <property type="component" value="Chromosome"/>
</dbReference>
<dbReference type="GO" id="GO:0005524">
    <property type="term" value="F:ATP binding"/>
    <property type="evidence" value="ECO:0007669"/>
    <property type="project" value="UniProtKB-UniRule"/>
</dbReference>
<dbReference type="GO" id="GO:0052381">
    <property type="term" value="F:tRNA dimethylallyltransferase activity"/>
    <property type="evidence" value="ECO:0007669"/>
    <property type="project" value="UniProtKB-UniRule"/>
</dbReference>
<dbReference type="GO" id="GO:0006400">
    <property type="term" value="P:tRNA modification"/>
    <property type="evidence" value="ECO:0007669"/>
    <property type="project" value="TreeGrafter"/>
</dbReference>
<dbReference type="Gene3D" id="3.40.50.300">
    <property type="entry name" value="P-loop containing nucleotide triphosphate hydrolases"/>
    <property type="match status" value="1"/>
</dbReference>
<dbReference type="HAMAP" id="MF_00185">
    <property type="entry name" value="IPP_trans"/>
    <property type="match status" value="1"/>
</dbReference>
<dbReference type="InterPro" id="IPR039657">
    <property type="entry name" value="Dimethylallyltransferase"/>
</dbReference>
<dbReference type="InterPro" id="IPR018022">
    <property type="entry name" value="IPT"/>
</dbReference>
<dbReference type="InterPro" id="IPR027417">
    <property type="entry name" value="P-loop_NTPase"/>
</dbReference>
<dbReference type="NCBIfam" id="TIGR00174">
    <property type="entry name" value="miaA"/>
    <property type="match status" value="1"/>
</dbReference>
<dbReference type="PANTHER" id="PTHR11088">
    <property type="entry name" value="TRNA DIMETHYLALLYLTRANSFERASE"/>
    <property type="match status" value="1"/>
</dbReference>
<dbReference type="PANTHER" id="PTHR11088:SF60">
    <property type="entry name" value="TRNA DIMETHYLALLYLTRANSFERASE"/>
    <property type="match status" value="1"/>
</dbReference>
<dbReference type="Pfam" id="PF01715">
    <property type="entry name" value="IPPT"/>
    <property type="match status" value="1"/>
</dbReference>
<dbReference type="SUPFAM" id="SSF52540">
    <property type="entry name" value="P-loop containing nucleoside triphosphate hydrolases"/>
    <property type="match status" value="2"/>
</dbReference>
<feature type="chain" id="PRO_0000163984" description="tRNA dimethylallyltransferase">
    <location>
        <begin position="1"/>
        <end position="294"/>
    </location>
</feature>
<feature type="region of interest" description="Interaction with substrate tRNA" evidence="1">
    <location>
        <begin position="35"/>
        <end position="38"/>
    </location>
</feature>
<feature type="binding site" evidence="1">
    <location>
        <begin position="10"/>
        <end position="17"/>
    </location>
    <ligand>
        <name>ATP</name>
        <dbReference type="ChEBI" id="CHEBI:30616"/>
    </ligand>
</feature>
<feature type="binding site" evidence="1">
    <location>
        <begin position="12"/>
        <end position="17"/>
    </location>
    <ligand>
        <name>substrate</name>
    </ligand>
</feature>
<feature type="site" description="Interaction with substrate tRNA" evidence="1">
    <location>
        <position position="101"/>
    </location>
</feature>
<feature type="site" description="Interaction with substrate tRNA" evidence="1">
    <location>
        <position position="127"/>
    </location>
</feature>
<accession>Q8DT87</accession>
<protein>
    <recommendedName>
        <fullName evidence="1">tRNA dimethylallyltransferase</fullName>
        <ecNumber evidence="1">2.5.1.75</ecNumber>
    </recommendedName>
    <alternativeName>
        <fullName evidence="1">Dimethylallyl diphosphate:tRNA dimethylallyltransferase</fullName>
        <shortName evidence="1">DMAPP:tRNA dimethylallyltransferase</shortName>
        <shortName evidence="1">DMATase</shortName>
    </alternativeName>
    <alternativeName>
        <fullName evidence="1">Isopentenyl-diphosphate:tRNA isopentenyltransferase</fullName>
        <shortName evidence="1">IPP transferase</shortName>
        <shortName evidence="1">IPPT</shortName>
        <shortName evidence="1">IPTase</shortName>
    </alternativeName>
</protein>
<gene>
    <name evidence="1" type="primary">miaA</name>
    <name type="ordered locus">SMU_1477</name>
</gene>
<proteinExistence type="inferred from homology"/>